<proteinExistence type="evidence at protein level"/>
<comment type="function">
    <text evidence="4 5 6">Plays a role in host liquefaction to facilitate horizontal transmission of the virus by hydrolyzing beta-chitin and by regulating the cysteine protease VCATH. Localized in the host reticulum endoplasmic via its KDEL motif, interacts with and thus prevents VCATH secretion before host cell lysis occurs.</text>
</comment>
<comment type="catalytic activity">
    <reaction>
        <text>Random endo-hydrolysis of N-acetyl-beta-D-glucosaminide (1-&gt;4)-beta-linkages in chitin and chitodextrins.</text>
        <dbReference type="EC" id="3.2.1.14"/>
    </reaction>
</comment>
<comment type="subunit">
    <text evidence="6">Interacts with host VCATH.</text>
</comment>
<comment type="subcellular location">
    <subcellularLocation>
        <location evidence="6 7">Host endoplasmic reticulum lumen</location>
    </subcellularLocation>
</comment>
<comment type="similarity">
    <text evidence="8">Belongs to the glycosyl hydrolase 18 family. Chitinase class II subfamily.</text>
</comment>
<organismHost>
    <name type="scientific">Lepidoptera</name>
    <name type="common">butterflies and moths</name>
    <dbReference type="NCBI Taxonomy" id="7088"/>
</organismHost>
<organism>
    <name type="scientific">Autographa californica nuclear polyhedrosis virus</name>
    <name type="common">AcMNPV</name>
    <dbReference type="NCBI Taxonomy" id="46015"/>
    <lineage>
        <taxon>Viruses</taxon>
        <taxon>Viruses incertae sedis</taxon>
        <taxon>Naldaviricetes</taxon>
        <taxon>Lefavirales</taxon>
        <taxon>Baculoviridae</taxon>
        <taxon>Alphabaculovirus</taxon>
        <taxon>Alphabaculovirus aucalifornicae</taxon>
    </lineage>
</organism>
<accession>P41684</accession>
<dbReference type="EC" id="3.2.1.14"/>
<dbReference type="EMBL" id="L22858">
    <property type="protein sequence ID" value="AAA66756.1"/>
    <property type="molecule type" value="Genomic_DNA"/>
</dbReference>
<dbReference type="PIR" id="G72865">
    <property type="entry name" value="G72865"/>
</dbReference>
<dbReference type="SMR" id="P41684"/>
<dbReference type="CAZy" id="GH18">
    <property type="family name" value="Glycoside Hydrolase Family 18"/>
</dbReference>
<dbReference type="GlyCosmos" id="P41684">
    <property type="glycosylation" value="2 sites, No reported glycans"/>
</dbReference>
<dbReference type="KEGG" id="vg:1403959"/>
<dbReference type="OrthoDB" id="2555at10239"/>
<dbReference type="Proteomes" id="UP000008292">
    <property type="component" value="Segment"/>
</dbReference>
<dbReference type="GO" id="GO:0044166">
    <property type="term" value="C:host cell endoplasmic reticulum lumen"/>
    <property type="evidence" value="ECO:0007669"/>
    <property type="project" value="UniProtKB-SubCell"/>
</dbReference>
<dbReference type="GO" id="GO:0008061">
    <property type="term" value="F:chitin binding"/>
    <property type="evidence" value="ECO:0007669"/>
    <property type="project" value="InterPro"/>
</dbReference>
<dbReference type="GO" id="GO:0008843">
    <property type="term" value="F:endochitinase activity"/>
    <property type="evidence" value="ECO:0007669"/>
    <property type="project" value="UniProtKB-EC"/>
</dbReference>
<dbReference type="GO" id="GO:0006032">
    <property type="term" value="P:chitin catabolic process"/>
    <property type="evidence" value="ECO:0007669"/>
    <property type="project" value="UniProtKB-KW"/>
</dbReference>
<dbReference type="GO" id="GO:0000272">
    <property type="term" value="P:polysaccharide catabolic process"/>
    <property type="evidence" value="ECO:0007669"/>
    <property type="project" value="UniProtKB-KW"/>
</dbReference>
<dbReference type="CDD" id="cd02848">
    <property type="entry name" value="E_set_Chitinase_N"/>
    <property type="match status" value="1"/>
</dbReference>
<dbReference type="CDD" id="cd06548">
    <property type="entry name" value="GH18_chitinase"/>
    <property type="match status" value="1"/>
</dbReference>
<dbReference type="Gene3D" id="3.10.50.10">
    <property type="match status" value="1"/>
</dbReference>
<dbReference type="Gene3D" id="3.20.20.80">
    <property type="entry name" value="Glycosidases"/>
    <property type="match status" value="1"/>
</dbReference>
<dbReference type="Gene3D" id="2.60.40.10">
    <property type="entry name" value="Immunoglobulins"/>
    <property type="match status" value="1"/>
</dbReference>
<dbReference type="InterPro" id="IPR011583">
    <property type="entry name" value="Chitinase_II/V-like_cat"/>
</dbReference>
<dbReference type="InterPro" id="IPR029070">
    <property type="entry name" value="Chitinase_insertion_sf"/>
</dbReference>
<dbReference type="InterPro" id="IPR013540">
    <property type="entry name" value="ChitinaseA_N"/>
</dbReference>
<dbReference type="InterPro" id="IPR001223">
    <property type="entry name" value="Glyco_hydro18_cat"/>
</dbReference>
<dbReference type="InterPro" id="IPR001579">
    <property type="entry name" value="Glyco_hydro_18_chit_AS"/>
</dbReference>
<dbReference type="InterPro" id="IPR017853">
    <property type="entry name" value="Glycoside_hydrolase_SF"/>
</dbReference>
<dbReference type="InterPro" id="IPR050314">
    <property type="entry name" value="Glycosyl_Hydrlase_18"/>
</dbReference>
<dbReference type="InterPro" id="IPR013783">
    <property type="entry name" value="Ig-like_fold"/>
</dbReference>
<dbReference type="InterPro" id="IPR014756">
    <property type="entry name" value="Ig_E-set"/>
</dbReference>
<dbReference type="InterPro" id="IPR022409">
    <property type="entry name" value="PKD/Chitinase_dom"/>
</dbReference>
<dbReference type="PANTHER" id="PTHR11177">
    <property type="entry name" value="CHITINASE"/>
    <property type="match status" value="1"/>
</dbReference>
<dbReference type="PANTHER" id="PTHR11177:SF317">
    <property type="entry name" value="CHITINASE 12-RELATED"/>
    <property type="match status" value="1"/>
</dbReference>
<dbReference type="Pfam" id="PF08329">
    <property type="entry name" value="ChitinaseA_N"/>
    <property type="match status" value="1"/>
</dbReference>
<dbReference type="Pfam" id="PF00704">
    <property type="entry name" value="Glyco_hydro_18"/>
    <property type="match status" value="1"/>
</dbReference>
<dbReference type="SMART" id="SM00636">
    <property type="entry name" value="Glyco_18"/>
    <property type="match status" value="1"/>
</dbReference>
<dbReference type="SMART" id="SM00089">
    <property type="entry name" value="PKD"/>
    <property type="match status" value="1"/>
</dbReference>
<dbReference type="SUPFAM" id="SSF51445">
    <property type="entry name" value="(Trans)glycosidases"/>
    <property type="match status" value="1"/>
</dbReference>
<dbReference type="SUPFAM" id="SSF54556">
    <property type="entry name" value="Chitinase insertion domain"/>
    <property type="match status" value="1"/>
</dbReference>
<dbReference type="SUPFAM" id="SSF81296">
    <property type="entry name" value="E set domains"/>
    <property type="match status" value="1"/>
</dbReference>
<dbReference type="PROSITE" id="PS00014">
    <property type="entry name" value="ER_TARGET"/>
    <property type="match status" value="1"/>
</dbReference>
<dbReference type="PROSITE" id="PS01095">
    <property type="entry name" value="GH18_1"/>
    <property type="match status" value="1"/>
</dbReference>
<dbReference type="PROSITE" id="PS51910">
    <property type="entry name" value="GH18_2"/>
    <property type="match status" value="1"/>
</dbReference>
<sequence>MLYKLLNVLWLVAVSNAIPGTPVIDWADRNYALVEINYEATAYENLIKPKEQVDVQVSWNVWNGDIGDIAYVLFDEQQVWKGDAESKRATIKVLVSGQFNMRVKLCNEDGCSVSDPVLVKVADTDGGHLAPLEYTWLENNKPGRREDKIVAAYFVEWGVYGRNFPVDKVPLPNLSHLLYGFIPICGGDGINDALKTIPGSFESLQRSCKGREDFKVAIHDPWAAVQKPQKGVSAWNEPYKGNFGQLMAAKLANPHLKILPSIGGWTLSDPFYFMHDVEKRNVFVDSVKEFLQVWKFFDGVDIDWEFPGGKGANPSLGDADGDAKTYILLLEELRAMLDDLEAQTGRVYELTSAISAGYDKIAVVNYAEAQKSLGKIFLMSYDFKGAWSNTDLGYQTTVYAPSWNSEELYTTHYAVDALLKQGVDPNKIIVGVAMYGRGWTGVTNYTNDNYFSGTGNGPGSGTWEDGVVDYRQIQKDLNNYVYTFDSAAQASYVFDKSKGDLISFDSVDSVLGKVKYVDRNKLGGLFAWEIDADNGDLLNAINAQFKPKDEL</sequence>
<protein>
    <recommendedName>
        <fullName>Chitinase</fullName>
        <ecNumber>3.2.1.14</ecNumber>
    </recommendedName>
</protein>
<reference key="1">
    <citation type="journal article" date="1994" name="Virology">
        <title>The complete DNA sequence of Autographa californica nuclear polyhedrosis virus.</title>
        <authorList>
            <person name="Ayres M.D."/>
            <person name="Howard S.C."/>
            <person name="Kuzio J."/>
            <person name="Lopez-Ferber M."/>
            <person name="Possee R.D."/>
        </authorList>
    </citation>
    <scope>NUCLEOTIDE SEQUENCE [LARGE SCALE GENOMIC DNA]</scope>
    <source>
        <strain>C6</strain>
    </source>
</reference>
<reference key="2">
    <citation type="journal article" date="1998" name="J. Virol.">
        <title>Localization of a baculovirus-induced chitinase in the insect cell endoplasmic reticulum.</title>
        <authorList>
            <person name="Thomas C.J."/>
            <person name="Brown H.L."/>
            <person name="Hawes C.R."/>
            <person name="Lee B.Y."/>
            <person name="Min M.K."/>
            <person name="King L.A."/>
            <person name="Possee R.D."/>
        </authorList>
    </citation>
    <scope>SUBCELLULAR LOCATION</scope>
</reference>
<reference key="3">
    <citation type="journal article" date="2000" name="Virology">
        <title>Autographa californica M nucleopolyhedrovirus chiA is required for processing of V-CATH.</title>
        <authorList>
            <person name="Hom L.G."/>
            <person name="Volkman L.E."/>
        </authorList>
    </citation>
    <scope>FUNCTION</scope>
</reference>
<reference key="4">
    <citation type="journal article" date="2011" name="Biosci. Biotechnol. Biochem.">
        <title>Chitinase from Autographa californica multiple nucleopolyhedrovirus: rapid purification from Sf-9 medium and mode of action.</title>
        <authorList>
            <person name="Fukamizo T."/>
            <person name="Sato H."/>
            <person name="Mizuhara M."/>
            <person name="Ohnuma T."/>
            <person name="Gotoh T."/>
            <person name="Hiwatashi K."/>
            <person name="Takahashi S."/>
        </authorList>
    </citation>
    <scope>FUNCTION</scope>
</reference>
<reference key="5">
    <citation type="journal article" date="2013" name="J. Virol.">
        <title>Role of interactions between Autographa californica multiple nucleopolyhedrovirus procathepsin and chitinase chitin-binding or active-site domains in viral cathepsin processing.</title>
        <authorList>
            <person name="Hodgson J.J."/>
            <person name="Arif B.M."/>
            <person name="Krell P.J."/>
        </authorList>
    </citation>
    <scope>INTERACTION WITH VCATH</scope>
    <scope>FUNCTION</scope>
    <scope>REGION</scope>
    <scope>SUBCELLULAR LOCATION</scope>
</reference>
<feature type="signal peptide" evidence="1">
    <location>
        <begin position="1"/>
        <end position="17"/>
    </location>
</feature>
<feature type="chain" id="PRO_0000011950" description="Chitinase">
    <location>
        <begin position="18"/>
        <end position="551"/>
    </location>
</feature>
<feature type="domain" description="GH18" evidence="2">
    <location>
        <begin position="148"/>
        <end position="548"/>
    </location>
</feature>
<feature type="region of interest" description="Chitin binding domain (CBD)" evidence="6">
    <location>
        <begin position="1"/>
        <end position="149"/>
    </location>
</feature>
<feature type="short sequence motif" description="Prevents secretion from ER" evidence="3">
    <location>
        <begin position="548"/>
        <end position="551"/>
    </location>
</feature>
<feature type="active site" description="Proton donor" evidence="2">
    <location>
        <position position="305"/>
    </location>
</feature>
<feature type="glycosylation site" description="N-linked (GlcNAc...) asparagine; by host" evidence="1">
    <location>
        <position position="173"/>
    </location>
</feature>
<feature type="glycosylation site" description="N-linked (GlcNAc...) asparagine; by host" evidence="1">
    <location>
        <position position="444"/>
    </location>
</feature>
<gene>
    <name type="primary">CHIA</name>
    <name type="ORF">ORF126</name>
</gene>
<evidence type="ECO:0000255" key="1"/>
<evidence type="ECO:0000255" key="2">
    <source>
        <dbReference type="PROSITE-ProRule" id="PRU01258"/>
    </source>
</evidence>
<evidence type="ECO:0000255" key="3">
    <source>
        <dbReference type="PROSITE-ProRule" id="PRU10138"/>
    </source>
</evidence>
<evidence type="ECO:0000269" key="4">
    <source>
    </source>
</evidence>
<evidence type="ECO:0000269" key="5">
    <source>
    </source>
</evidence>
<evidence type="ECO:0000269" key="6">
    <source>
    </source>
</evidence>
<evidence type="ECO:0000269" key="7">
    <source>
    </source>
</evidence>
<evidence type="ECO:0000305" key="8"/>
<keyword id="KW-0119">Carbohydrate metabolism</keyword>
<keyword id="KW-0146">Chitin degradation</keyword>
<keyword id="KW-0325">Glycoprotein</keyword>
<keyword id="KW-0326">Glycosidase</keyword>
<keyword id="KW-1038">Host endoplasmic reticulum</keyword>
<keyword id="KW-0378">Hydrolase</keyword>
<keyword id="KW-0624">Polysaccharide degradation</keyword>
<keyword id="KW-1185">Reference proteome</keyword>
<keyword id="KW-0732">Signal</keyword>
<name>CHIT_NPVAC</name>